<name>ATPL_STAAR</name>
<evidence type="ECO:0000255" key="1">
    <source>
        <dbReference type="HAMAP-Rule" id="MF_01396"/>
    </source>
</evidence>
<keyword id="KW-0066">ATP synthesis</keyword>
<keyword id="KW-1003">Cell membrane</keyword>
<keyword id="KW-0138">CF(0)</keyword>
<keyword id="KW-0375">Hydrogen ion transport</keyword>
<keyword id="KW-0406">Ion transport</keyword>
<keyword id="KW-0446">Lipid-binding</keyword>
<keyword id="KW-0472">Membrane</keyword>
<keyword id="KW-0812">Transmembrane</keyword>
<keyword id="KW-1133">Transmembrane helix</keyword>
<keyword id="KW-0813">Transport</keyword>
<gene>
    <name evidence="1" type="primary">atpE</name>
    <name type="ordered locus">SAR2196</name>
</gene>
<organism>
    <name type="scientific">Staphylococcus aureus (strain MRSA252)</name>
    <dbReference type="NCBI Taxonomy" id="282458"/>
    <lineage>
        <taxon>Bacteria</taxon>
        <taxon>Bacillati</taxon>
        <taxon>Bacillota</taxon>
        <taxon>Bacilli</taxon>
        <taxon>Bacillales</taxon>
        <taxon>Staphylococcaceae</taxon>
        <taxon>Staphylococcus</taxon>
    </lineage>
</organism>
<dbReference type="EMBL" id="BX571856">
    <property type="protein sequence ID" value="CAG41177.1"/>
    <property type="molecule type" value="Genomic_DNA"/>
</dbReference>
<dbReference type="RefSeq" id="WP_001048816.1">
    <property type="nucleotide sequence ID" value="NC_002952.2"/>
</dbReference>
<dbReference type="SMR" id="Q6GEW7"/>
<dbReference type="GeneID" id="98346415"/>
<dbReference type="KEGG" id="sar:SAR2196"/>
<dbReference type="HOGENOM" id="CLU_148047_1_1_9"/>
<dbReference type="Proteomes" id="UP000000596">
    <property type="component" value="Chromosome"/>
</dbReference>
<dbReference type="GO" id="GO:0005886">
    <property type="term" value="C:plasma membrane"/>
    <property type="evidence" value="ECO:0007669"/>
    <property type="project" value="UniProtKB-SubCell"/>
</dbReference>
<dbReference type="GO" id="GO:0045259">
    <property type="term" value="C:proton-transporting ATP synthase complex"/>
    <property type="evidence" value="ECO:0007669"/>
    <property type="project" value="UniProtKB-KW"/>
</dbReference>
<dbReference type="GO" id="GO:0033177">
    <property type="term" value="C:proton-transporting two-sector ATPase complex, proton-transporting domain"/>
    <property type="evidence" value="ECO:0007669"/>
    <property type="project" value="InterPro"/>
</dbReference>
<dbReference type="GO" id="GO:0008289">
    <property type="term" value="F:lipid binding"/>
    <property type="evidence" value="ECO:0007669"/>
    <property type="project" value="UniProtKB-KW"/>
</dbReference>
<dbReference type="GO" id="GO:0046933">
    <property type="term" value="F:proton-transporting ATP synthase activity, rotational mechanism"/>
    <property type="evidence" value="ECO:0007669"/>
    <property type="project" value="UniProtKB-UniRule"/>
</dbReference>
<dbReference type="CDD" id="cd18185">
    <property type="entry name" value="ATP-synt_Fo_c_ATPE"/>
    <property type="match status" value="1"/>
</dbReference>
<dbReference type="FunFam" id="1.20.20.10:FF:000004">
    <property type="entry name" value="ATP synthase subunit c"/>
    <property type="match status" value="1"/>
</dbReference>
<dbReference type="Gene3D" id="1.20.20.10">
    <property type="entry name" value="F1F0 ATP synthase subunit C"/>
    <property type="match status" value="1"/>
</dbReference>
<dbReference type="HAMAP" id="MF_01396">
    <property type="entry name" value="ATP_synth_c_bact"/>
    <property type="match status" value="1"/>
</dbReference>
<dbReference type="InterPro" id="IPR005953">
    <property type="entry name" value="ATP_synth_csu_bac/chlpt"/>
</dbReference>
<dbReference type="InterPro" id="IPR000454">
    <property type="entry name" value="ATP_synth_F0_csu"/>
</dbReference>
<dbReference type="InterPro" id="IPR020537">
    <property type="entry name" value="ATP_synth_F0_csu_DDCD_BS"/>
</dbReference>
<dbReference type="InterPro" id="IPR038662">
    <property type="entry name" value="ATP_synth_F0_csu_sf"/>
</dbReference>
<dbReference type="InterPro" id="IPR002379">
    <property type="entry name" value="ATPase_proteolipid_c-like_dom"/>
</dbReference>
<dbReference type="InterPro" id="IPR035921">
    <property type="entry name" value="F/V-ATP_Csub_sf"/>
</dbReference>
<dbReference type="NCBIfam" id="TIGR01260">
    <property type="entry name" value="ATP_synt_c"/>
    <property type="match status" value="1"/>
</dbReference>
<dbReference type="NCBIfam" id="NF005363">
    <property type="entry name" value="PRK06876.1"/>
    <property type="match status" value="1"/>
</dbReference>
<dbReference type="Pfam" id="PF00137">
    <property type="entry name" value="ATP-synt_C"/>
    <property type="match status" value="1"/>
</dbReference>
<dbReference type="PRINTS" id="PR00124">
    <property type="entry name" value="ATPASEC"/>
</dbReference>
<dbReference type="SUPFAM" id="SSF81333">
    <property type="entry name" value="F1F0 ATP synthase subunit C"/>
    <property type="match status" value="1"/>
</dbReference>
<dbReference type="PROSITE" id="PS00605">
    <property type="entry name" value="ATPASE_C"/>
    <property type="match status" value="1"/>
</dbReference>
<reference key="1">
    <citation type="journal article" date="2004" name="Proc. Natl. Acad. Sci. U.S.A.">
        <title>Complete genomes of two clinical Staphylococcus aureus strains: evidence for the rapid evolution of virulence and drug resistance.</title>
        <authorList>
            <person name="Holden M.T.G."/>
            <person name="Feil E.J."/>
            <person name="Lindsay J.A."/>
            <person name="Peacock S.J."/>
            <person name="Day N.P.J."/>
            <person name="Enright M.C."/>
            <person name="Foster T.J."/>
            <person name="Moore C.E."/>
            <person name="Hurst L."/>
            <person name="Atkin R."/>
            <person name="Barron A."/>
            <person name="Bason N."/>
            <person name="Bentley S.D."/>
            <person name="Chillingworth C."/>
            <person name="Chillingworth T."/>
            <person name="Churcher C."/>
            <person name="Clark L."/>
            <person name="Corton C."/>
            <person name="Cronin A."/>
            <person name="Doggett J."/>
            <person name="Dowd L."/>
            <person name="Feltwell T."/>
            <person name="Hance Z."/>
            <person name="Harris B."/>
            <person name="Hauser H."/>
            <person name="Holroyd S."/>
            <person name="Jagels K."/>
            <person name="James K.D."/>
            <person name="Lennard N."/>
            <person name="Line A."/>
            <person name="Mayes R."/>
            <person name="Moule S."/>
            <person name="Mungall K."/>
            <person name="Ormond D."/>
            <person name="Quail M.A."/>
            <person name="Rabbinowitsch E."/>
            <person name="Rutherford K.M."/>
            <person name="Sanders M."/>
            <person name="Sharp S."/>
            <person name="Simmonds M."/>
            <person name="Stevens K."/>
            <person name="Whitehead S."/>
            <person name="Barrell B.G."/>
            <person name="Spratt B.G."/>
            <person name="Parkhill J."/>
        </authorList>
    </citation>
    <scope>NUCLEOTIDE SEQUENCE [LARGE SCALE GENOMIC DNA]</scope>
    <source>
        <strain>MRSA252</strain>
    </source>
</reference>
<sequence>MNLIAAAIAIGLSALGAGIGNGLIVSRTVEGVARQPEARGQLMGIMFIGVGLVEALPIIGVVIAFMTFAG</sequence>
<comment type="function">
    <text evidence="1">F(1)F(0) ATP synthase produces ATP from ADP in the presence of a proton or sodium gradient. F-type ATPases consist of two structural domains, F(1) containing the extramembraneous catalytic core and F(0) containing the membrane proton channel, linked together by a central stalk and a peripheral stalk. During catalysis, ATP synthesis in the catalytic domain of F(1) is coupled via a rotary mechanism of the central stalk subunits to proton translocation.</text>
</comment>
<comment type="function">
    <text evidence="1">Key component of the F(0) channel; it plays a direct role in translocation across the membrane. A homomeric c-ring of between 10-14 subunits forms the central stalk rotor element with the F(1) delta and epsilon subunits.</text>
</comment>
<comment type="subunit">
    <text evidence="1">F-type ATPases have 2 components, F(1) - the catalytic core - and F(0) - the membrane proton channel. F(1) has five subunits: alpha(3), beta(3), gamma(1), delta(1), epsilon(1). F(0) has three main subunits: a(1), b(2) and c(10-14). The alpha and beta chains form an alternating ring which encloses part of the gamma chain. F(1) is attached to F(0) by a central stalk formed by the gamma and epsilon chains, while a peripheral stalk is formed by the delta and b chains.</text>
</comment>
<comment type="subcellular location">
    <subcellularLocation>
        <location evidence="1">Cell membrane</location>
        <topology evidence="1">Multi-pass membrane protein</topology>
    </subcellularLocation>
</comment>
<comment type="similarity">
    <text evidence="1">Belongs to the ATPase C chain family.</text>
</comment>
<proteinExistence type="inferred from homology"/>
<protein>
    <recommendedName>
        <fullName evidence="1">ATP synthase subunit c</fullName>
    </recommendedName>
    <alternativeName>
        <fullName evidence="1">ATP synthase F(0) sector subunit c</fullName>
    </alternativeName>
    <alternativeName>
        <fullName evidence="1">F-type ATPase subunit c</fullName>
        <shortName evidence="1">F-ATPase subunit c</shortName>
    </alternativeName>
    <alternativeName>
        <fullName evidence="1">Lipid-binding protein</fullName>
    </alternativeName>
</protein>
<feature type="chain" id="PRO_1000184503" description="ATP synthase subunit c">
    <location>
        <begin position="1"/>
        <end position="70"/>
    </location>
</feature>
<feature type="transmembrane region" description="Helical" evidence="1">
    <location>
        <begin position="4"/>
        <end position="24"/>
    </location>
</feature>
<feature type="transmembrane region" description="Helical" evidence="1">
    <location>
        <begin position="45"/>
        <end position="65"/>
    </location>
</feature>
<feature type="site" description="Reversibly protonated during proton transport" evidence="1">
    <location>
        <position position="54"/>
    </location>
</feature>
<accession>Q6GEW7</accession>